<organism>
    <name type="scientific">Escherichia coli O157:H7 (strain EC4115 / EHEC)</name>
    <dbReference type="NCBI Taxonomy" id="444450"/>
    <lineage>
        <taxon>Bacteria</taxon>
        <taxon>Pseudomonadati</taxon>
        <taxon>Pseudomonadota</taxon>
        <taxon>Gammaproteobacteria</taxon>
        <taxon>Enterobacterales</taxon>
        <taxon>Enterobacteriaceae</taxon>
        <taxon>Escherichia</taxon>
    </lineage>
</organism>
<evidence type="ECO:0000255" key="1">
    <source>
        <dbReference type="HAMAP-Rule" id="MF_01152"/>
    </source>
</evidence>
<keyword id="KW-0143">Chaperone</keyword>
<keyword id="KW-0963">Cytoplasm</keyword>
<keyword id="KW-0235">DNA replication</keyword>
<keyword id="KW-0479">Metal-binding</keyword>
<keyword id="KW-0677">Repeat</keyword>
<keyword id="KW-0346">Stress response</keyword>
<keyword id="KW-0862">Zinc</keyword>
<keyword id="KW-0863">Zinc-finger</keyword>
<feature type="chain" id="PRO_1000137683" description="Chaperone protein DnaJ">
    <location>
        <begin position="1"/>
        <end position="376"/>
    </location>
</feature>
<feature type="domain" description="J" evidence="1">
    <location>
        <begin position="5"/>
        <end position="70"/>
    </location>
</feature>
<feature type="repeat" description="CXXCXGXG motif">
    <location>
        <begin position="144"/>
        <end position="151"/>
    </location>
</feature>
<feature type="repeat" description="CXXCXGXG motif">
    <location>
        <begin position="161"/>
        <end position="168"/>
    </location>
</feature>
<feature type="repeat" description="CXXCXGXG motif">
    <location>
        <begin position="183"/>
        <end position="190"/>
    </location>
</feature>
<feature type="repeat" description="CXXCXGXG motif">
    <location>
        <begin position="197"/>
        <end position="204"/>
    </location>
</feature>
<feature type="zinc finger region" description="CR-type" evidence="1">
    <location>
        <begin position="131"/>
        <end position="209"/>
    </location>
</feature>
<feature type="binding site" evidence="1">
    <location>
        <position position="144"/>
    </location>
    <ligand>
        <name>Zn(2+)</name>
        <dbReference type="ChEBI" id="CHEBI:29105"/>
        <label>1</label>
    </ligand>
</feature>
<feature type="binding site" evidence="1">
    <location>
        <position position="147"/>
    </location>
    <ligand>
        <name>Zn(2+)</name>
        <dbReference type="ChEBI" id="CHEBI:29105"/>
        <label>1</label>
    </ligand>
</feature>
<feature type="binding site" evidence="1">
    <location>
        <position position="161"/>
    </location>
    <ligand>
        <name>Zn(2+)</name>
        <dbReference type="ChEBI" id="CHEBI:29105"/>
        <label>2</label>
    </ligand>
</feature>
<feature type="binding site" evidence="1">
    <location>
        <position position="164"/>
    </location>
    <ligand>
        <name>Zn(2+)</name>
        <dbReference type="ChEBI" id="CHEBI:29105"/>
        <label>2</label>
    </ligand>
</feature>
<feature type="binding site" evidence="1">
    <location>
        <position position="183"/>
    </location>
    <ligand>
        <name>Zn(2+)</name>
        <dbReference type="ChEBI" id="CHEBI:29105"/>
        <label>2</label>
    </ligand>
</feature>
<feature type="binding site" evidence="1">
    <location>
        <position position="186"/>
    </location>
    <ligand>
        <name>Zn(2+)</name>
        <dbReference type="ChEBI" id="CHEBI:29105"/>
        <label>2</label>
    </ligand>
</feature>
<feature type="binding site" evidence="1">
    <location>
        <position position="197"/>
    </location>
    <ligand>
        <name>Zn(2+)</name>
        <dbReference type="ChEBI" id="CHEBI:29105"/>
        <label>1</label>
    </ligand>
</feature>
<feature type="binding site" evidence="1">
    <location>
        <position position="200"/>
    </location>
    <ligand>
        <name>Zn(2+)</name>
        <dbReference type="ChEBI" id="CHEBI:29105"/>
        <label>1</label>
    </ligand>
</feature>
<gene>
    <name evidence="1" type="primary">dnaJ</name>
    <name type="ordered locus">ECH74115_0015</name>
</gene>
<protein>
    <recommendedName>
        <fullName evidence="1">Chaperone protein DnaJ</fullName>
    </recommendedName>
</protein>
<comment type="function">
    <text evidence="1">Participates actively in the response to hyperosmotic and heat shock by preventing the aggregation of stress-denatured proteins and by disaggregating proteins, also in an autonomous, DnaK-independent fashion. Unfolded proteins bind initially to DnaJ; upon interaction with the DnaJ-bound protein, DnaK hydrolyzes its bound ATP, resulting in the formation of a stable complex. GrpE releases ADP from DnaK; ATP binding to DnaK triggers the release of the substrate protein, thus completing the reaction cycle. Several rounds of ATP-dependent interactions between DnaJ, DnaK and GrpE are required for fully efficient folding. Also involved, together with DnaK and GrpE, in the DNA replication of plasmids through activation of initiation proteins.</text>
</comment>
<comment type="cofactor">
    <cofactor evidence="1">
        <name>Zn(2+)</name>
        <dbReference type="ChEBI" id="CHEBI:29105"/>
    </cofactor>
    <text evidence="1">Binds 2 Zn(2+) ions per monomer.</text>
</comment>
<comment type="subunit">
    <text evidence="1">Homodimer.</text>
</comment>
<comment type="subcellular location">
    <subcellularLocation>
        <location evidence="1">Cytoplasm</location>
    </subcellularLocation>
</comment>
<comment type="domain">
    <text evidence="1">The J domain is necessary and sufficient to stimulate DnaK ATPase activity. Zinc center 1 plays an important role in the autonomous, DnaK-independent chaperone activity of DnaJ. Zinc center 2 is essential for interaction with DnaK and for DnaJ activity.</text>
</comment>
<comment type="similarity">
    <text evidence="1">Belongs to the DnaJ family.</text>
</comment>
<reference key="1">
    <citation type="journal article" date="2011" name="Proc. Natl. Acad. Sci. U.S.A.">
        <title>Genomic anatomy of Escherichia coli O157:H7 outbreaks.</title>
        <authorList>
            <person name="Eppinger M."/>
            <person name="Mammel M.K."/>
            <person name="Leclerc J.E."/>
            <person name="Ravel J."/>
            <person name="Cebula T.A."/>
        </authorList>
    </citation>
    <scope>NUCLEOTIDE SEQUENCE [LARGE SCALE GENOMIC DNA]</scope>
    <source>
        <strain>EC4115 / EHEC</strain>
    </source>
</reference>
<proteinExistence type="inferred from homology"/>
<sequence length="376" mass="41074">MAKQDYYEILGVSKTAEEREIKKAYKRLAMKYHPDRNQGDKEAETKFKEIKEAYEVLTDSQKRAAYDQYGHAAFEQGGMGGGGFGGGADFSDIFGDVFGDIFGGGRGRQRAARGADLRYNMELTLEEAVRGVTKEIRIPTLEECDVCHGSGAKPGTQPQTCPTCHGSGQVQMRQGFFAVQQTCPHCQGRGTLIKDPCNKCHGHGRVERSKTLSVKIPAGVDTGDRIRLAGEGEAGEHGAPAGDLYVQVQVKQHPIFEREGNNLYCEVPINFAMAALGGEIEVPTLDGRVKLKVPGETQTGKLFRMRGKGVKSVRGGAQGDLLCRVVVETPVGLNEKQKQLLQELQESFGGPTGEHNSPRSKSFFDGVKKFFDDLTR</sequence>
<dbReference type="EMBL" id="CP001164">
    <property type="protein sequence ID" value="ACI38471.1"/>
    <property type="molecule type" value="Genomic_DNA"/>
</dbReference>
<dbReference type="RefSeq" id="WP_001118472.1">
    <property type="nucleotide sequence ID" value="NC_011353.1"/>
</dbReference>
<dbReference type="SMR" id="B5YYA8"/>
<dbReference type="KEGG" id="ecf:ECH74115_0015"/>
<dbReference type="HOGENOM" id="CLU_017633_0_7_6"/>
<dbReference type="GO" id="GO:0005737">
    <property type="term" value="C:cytoplasm"/>
    <property type="evidence" value="ECO:0007669"/>
    <property type="project" value="UniProtKB-SubCell"/>
</dbReference>
<dbReference type="GO" id="GO:0005524">
    <property type="term" value="F:ATP binding"/>
    <property type="evidence" value="ECO:0007669"/>
    <property type="project" value="InterPro"/>
</dbReference>
<dbReference type="GO" id="GO:0031072">
    <property type="term" value="F:heat shock protein binding"/>
    <property type="evidence" value="ECO:0007669"/>
    <property type="project" value="InterPro"/>
</dbReference>
<dbReference type="GO" id="GO:0051082">
    <property type="term" value="F:unfolded protein binding"/>
    <property type="evidence" value="ECO:0007669"/>
    <property type="project" value="UniProtKB-UniRule"/>
</dbReference>
<dbReference type="GO" id="GO:0008270">
    <property type="term" value="F:zinc ion binding"/>
    <property type="evidence" value="ECO:0007669"/>
    <property type="project" value="UniProtKB-UniRule"/>
</dbReference>
<dbReference type="GO" id="GO:0051085">
    <property type="term" value="P:chaperone cofactor-dependent protein refolding"/>
    <property type="evidence" value="ECO:0007669"/>
    <property type="project" value="TreeGrafter"/>
</dbReference>
<dbReference type="GO" id="GO:0006260">
    <property type="term" value="P:DNA replication"/>
    <property type="evidence" value="ECO:0007669"/>
    <property type="project" value="UniProtKB-KW"/>
</dbReference>
<dbReference type="GO" id="GO:0042026">
    <property type="term" value="P:protein refolding"/>
    <property type="evidence" value="ECO:0007669"/>
    <property type="project" value="TreeGrafter"/>
</dbReference>
<dbReference type="GO" id="GO:0009408">
    <property type="term" value="P:response to heat"/>
    <property type="evidence" value="ECO:0007669"/>
    <property type="project" value="InterPro"/>
</dbReference>
<dbReference type="CDD" id="cd06257">
    <property type="entry name" value="DnaJ"/>
    <property type="match status" value="1"/>
</dbReference>
<dbReference type="CDD" id="cd10747">
    <property type="entry name" value="DnaJ_C"/>
    <property type="match status" value="1"/>
</dbReference>
<dbReference type="CDD" id="cd10719">
    <property type="entry name" value="DnaJ_zf"/>
    <property type="match status" value="1"/>
</dbReference>
<dbReference type="FunFam" id="1.10.287.110:FF:000003">
    <property type="entry name" value="Molecular chaperone DnaJ"/>
    <property type="match status" value="1"/>
</dbReference>
<dbReference type="FunFam" id="2.10.230.10:FF:000002">
    <property type="entry name" value="Molecular chaperone DnaJ"/>
    <property type="match status" value="1"/>
</dbReference>
<dbReference type="FunFam" id="2.60.260.20:FF:000004">
    <property type="entry name" value="Molecular chaperone DnaJ"/>
    <property type="match status" value="1"/>
</dbReference>
<dbReference type="Gene3D" id="1.10.287.110">
    <property type="entry name" value="DnaJ domain"/>
    <property type="match status" value="1"/>
</dbReference>
<dbReference type="Gene3D" id="2.10.230.10">
    <property type="entry name" value="Heat shock protein DnaJ, cysteine-rich domain"/>
    <property type="match status" value="1"/>
</dbReference>
<dbReference type="Gene3D" id="2.60.260.20">
    <property type="entry name" value="Urease metallochaperone UreE, N-terminal domain"/>
    <property type="match status" value="2"/>
</dbReference>
<dbReference type="HAMAP" id="MF_01152">
    <property type="entry name" value="DnaJ"/>
    <property type="match status" value="1"/>
</dbReference>
<dbReference type="InterPro" id="IPR012724">
    <property type="entry name" value="DnaJ"/>
</dbReference>
<dbReference type="InterPro" id="IPR002939">
    <property type="entry name" value="DnaJ_C"/>
</dbReference>
<dbReference type="InterPro" id="IPR001623">
    <property type="entry name" value="DnaJ_domain"/>
</dbReference>
<dbReference type="InterPro" id="IPR018253">
    <property type="entry name" value="DnaJ_domain_CS"/>
</dbReference>
<dbReference type="InterPro" id="IPR008971">
    <property type="entry name" value="HSP40/DnaJ_pept-bd"/>
</dbReference>
<dbReference type="InterPro" id="IPR001305">
    <property type="entry name" value="HSP_DnaJ_Cys-rich_dom"/>
</dbReference>
<dbReference type="InterPro" id="IPR036410">
    <property type="entry name" value="HSP_DnaJ_Cys-rich_dom_sf"/>
</dbReference>
<dbReference type="InterPro" id="IPR036869">
    <property type="entry name" value="J_dom_sf"/>
</dbReference>
<dbReference type="NCBIfam" id="TIGR02349">
    <property type="entry name" value="DnaJ_bact"/>
    <property type="match status" value="1"/>
</dbReference>
<dbReference type="NCBIfam" id="NF008035">
    <property type="entry name" value="PRK10767.1"/>
    <property type="match status" value="1"/>
</dbReference>
<dbReference type="PANTHER" id="PTHR43096:SF48">
    <property type="entry name" value="CHAPERONE PROTEIN DNAJ"/>
    <property type="match status" value="1"/>
</dbReference>
<dbReference type="PANTHER" id="PTHR43096">
    <property type="entry name" value="DNAJ HOMOLOG 1, MITOCHONDRIAL-RELATED"/>
    <property type="match status" value="1"/>
</dbReference>
<dbReference type="Pfam" id="PF00226">
    <property type="entry name" value="DnaJ"/>
    <property type="match status" value="1"/>
</dbReference>
<dbReference type="Pfam" id="PF01556">
    <property type="entry name" value="DnaJ_C"/>
    <property type="match status" value="1"/>
</dbReference>
<dbReference type="Pfam" id="PF00684">
    <property type="entry name" value="DnaJ_CXXCXGXG"/>
    <property type="match status" value="1"/>
</dbReference>
<dbReference type="PRINTS" id="PR00625">
    <property type="entry name" value="JDOMAIN"/>
</dbReference>
<dbReference type="SMART" id="SM00271">
    <property type="entry name" value="DnaJ"/>
    <property type="match status" value="1"/>
</dbReference>
<dbReference type="SUPFAM" id="SSF46565">
    <property type="entry name" value="Chaperone J-domain"/>
    <property type="match status" value="1"/>
</dbReference>
<dbReference type="SUPFAM" id="SSF57938">
    <property type="entry name" value="DnaJ/Hsp40 cysteine-rich domain"/>
    <property type="match status" value="1"/>
</dbReference>
<dbReference type="SUPFAM" id="SSF49493">
    <property type="entry name" value="HSP40/DnaJ peptide-binding domain"/>
    <property type="match status" value="2"/>
</dbReference>
<dbReference type="PROSITE" id="PS00636">
    <property type="entry name" value="DNAJ_1"/>
    <property type="match status" value="1"/>
</dbReference>
<dbReference type="PROSITE" id="PS50076">
    <property type="entry name" value="DNAJ_2"/>
    <property type="match status" value="1"/>
</dbReference>
<dbReference type="PROSITE" id="PS51188">
    <property type="entry name" value="ZF_CR"/>
    <property type="match status" value="1"/>
</dbReference>
<name>DNAJ_ECO5E</name>
<accession>B5YYA8</accession>